<feature type="chain" id="PRO_0000250673" description="ATP-binding cassette sub-family A member 6">
    <location>
        <begin position="1"/>
        <end position="1624"/>
    </location>
</feature>
<feature type="transmembrane region" description="Helical" evidence="2">
    <location>
        <begin position="31"/>
        <end position="51"/>
    </location>
</feature>
<feature type="transmembrane region" description="Helical" evidence="2">
    <location>
        <begin position="222"/>
        <end position="242"/>
    </location>
</feature>
<feature type="transmembrane region" description="Helical" evidence="2">
    <location>
        <begin position="267"/>
        <end position="287"/>
    </location>
</feature>
<feature type="transmembrane region" description="Helical" evidence="2">
    <location>
        <begin position="297"/>
        <end position="317"/>
    </location>
</feature>
<feature type="transmembrane region" description="Helical" evidence="2">
    <location>
        <begin position="326"/>
        <end position="346"/>
    </location>
</feature>
<feature type="transmembrane region" description="Helical" evidence="2">
    <location>
        <begin position="356"/>
        <end position="376"/>
    </location>
</feature>
<feature type="transmembrane region" description="Helical" evidence="2">
    <location>
        <begin position="395"/>
        <end position="415"/>
    </location>
</feature>
<feature type="transmembrane region" description="Helical" evidence="2">
    <location>
        <begin position="854"/>
        <end position="874"/>
    </location>
</feature>
<feature type="transmembrane region" description="Helical" evidence="2">
    <location>
        <begin position="971"/>
        <end position="991"/>
    </location>
</feature>
<feature type="transmembrane region" description="Helical" evidence="2">
    <location>
        <begin position="1005"/>
        <end position="1025"/>
    </location>
</feature>
<feature type="transmembrane region" description="Helical" evidence="2">
    <location>
        <begin position="1058"/>
        <end position="1078"/>
    </location>
</feature>
<feature type="transmembrane region" description="Helical" evidence="2">
    <location>
        <begin position="1094"/>
        <end position="1114"/>
    </location>
</feature>
<feature type="transmembrane region" description="Helical" evidence="2">
    <location>
        <begin position="1130"/>
        <end position="1150"/>
    </location>
</feature>
<feature type="transmembrane region" description="Helical" evidence="2">
    <location>
        <begin position="1154"/>
        <end position="1174"/>
    </location>
</feature>
<feature type="transmembrane region" description="Helical" evidence="2">
    <location>
        <begin position="1194"/>
        <end position="1214"/>
    </location>
</feature>
<feature type="domain" description="ABC transporter 1" evidence="3">
    <location>
        <begin position="478"/>
        <end position="713"/>
    </location>
</feature>
<feature type="domain" description="ABC transporter 2" evidence="3">
    <location>
        <begin position="1282"/>
        <end position="1520"/>
    </location>
</feature>
<feature type="binding site" evidence="3">
    <location>
        <begin position="514"/>
        <end position="521"/>
    </location>
    <ligand>
        <name>ATP</name>
        <dbReference type="ChEBI" id="CHEBI:30616"/>
        <label>1</label>
    </ligand>
</feature>
<feature type="binding site" evidence="3">
    <location>
        <begin position="1320"/>
        <end position="1327"/>
    </location>
    <ligand>
        <name>ATP</name>
        <dbReference type="ChEBI" id="CHEBI:30616"/>
        <label>2</label>
    </ligand>
</feature>
<feature type="glycosylation site" description="N-linked (GlcNAc...) asparagine" evidence="2">
    <location>
        <position position="84"/>
    </location>
</feature>
<feature type="glycosylation site" description="N-linked (GlcNAc...) asparagine" evidence="2">
    <location>
        <position position="91"/>
    </location>
</feature>
<feature type="glycosylation site" description="N-linked (GlcNAc...) asparagine" evidence="2">
    <location>
        <position position="576"/>
    </location>
</feature>
<feature type="splice variant" id="VSP_020699" description="In isoform 2." evidence="5">
    <original>IFQDYNLNGVVFPD</original>
    <variation>NTEVITDASNGINP</variation>
    <location>
        <begin position="375"/>
        <end position="388"/>
    </location>
</feature>
<feature type="splice variant" id="VSP_020700" description="In isoform 2." evidence="5">
    <location>
        <begin position="389"/>
        <end position="1624"/>
    </location>
</feature>
<feature type="sequence conflict" description="In Ref. 3; BAC35372." evidence="6" ref="3">
    <original>I</original>
    <variation>V</variation>
    <location>
        <position position="331"/>
    </location>
</feature>
<feature type="sequence conflict" description="In Ref. 1; AAM90907." evidence="6" ref="1">
    <original>I</original>
    <variation>T</variation>
    <location>
        <position position="1020"/>
    </location>
</feature>
<sequence>MKELSVHVRQQTRALLHKILLKKWRRKRESLLEWSIPIIIGLHMGLFSYLARNIQVLEVPPQDLGSLNEFNGSSLVVVYTPISNITQQIMNKTTFAPTMKGTRIIGVPSIEDLDEVLLHNIPDALGVIFNDSFSYQLKVLRMYGNPFLKEDLLAHCWDTHSQAFCSLSKYWERGFVALQTAINAGIIEVTTNHSVMEELMSIDGINMKTLPFIPRDLSDYEIFILFCLLYFSSFIYFASSNVTKERKQCKEVMKVMGLQDSAFWLSWGLIYVGFIFIISIFIAIIITSTQIIMMTGFLVIFTLFFLYGLSLIAVTFLMAVLLQKAVLTNLIVLFFTLFWGCVGFTVLHKELPPSLEWVLSIFSPFAFTSGMAKVIFQDYNLNGVVFPDPSGESYVMIAVFFILAFDSLLYLVLALYFDKILLYGAEHRSAPLFFLNPTSCFRKTANRNKVIERDLDPELPSDEYFEPVDPEYQGKEAIRIRNIKKEYKGKSGKVKALKGLFLDIYESQITAILGHSGAGKSSLLNILSGLYVPTAGSVTVYNKNLSDMQDLKEIRKAIGVCPQHNVQFDALTVKENLTLFAKIKGILPQDVEQEVQQILSELDMQNIRDDLAEHLSEGQKRKLTFGIATVGDPQILLLDEPTVGLDPFSRQRIWGFLKERRADHVILFSTQFMDEADILADRKVLIANGALKCTGSSVFLKRKWGLGYHLSLFMDETCDSERLTSFINHHIPYAKLKAKTKEKLVYILPLERTSEFPEFFSDLDKYSGQGLMSYEVSMSTLNDVFLNLEGEPSTKQDFEKRETATDSESLNDMEVAYPSLSQVQETVSTMSLWRMQVCAIARLRILKLKRERKAFLIILLLLGIALLPLVIEYVANALLEVKNNWEFKTDLYFLSPGQLPQGLRTSLLVINNTESNIEDFLQSLKHQNIVLEVDDFENRNATNSLSYNGAIIVSGRQKDYRFSAVCNTKRLHCFPILMNVISNGILHMLNHTQYIRIKEDIFSPFIVLVWTGIQETCLFILCVICSLSPHIAMSSVSDYKKKADSQLWISGLYPSAYWCGQAVVDISLFSGMLLTSYFTSYTSKLLNIDMTSEIVFSVIVLALGCAASLVFLTYVISFVFGKRKKNSTLWSICFLLVIAITFEKVANGPFNEALVISATMLVPSFALNGLLVVLEMRAYQYYIEFEEIKHGLSAVDLLLCLIPYIHTLLFIFVLRCLELKYGKNVVRRDPIFRIAPQSLKAQPNPEEPIDEDENVQAERLRTSDALSTPNLDEKPVIIASCLHKEYAGQKKHCCSRRTRNMAVRNVSFCVNKGEILGLLGPDGAGKSSSIRMIAGITKPTAGQVELKRLSSAVGHQGDSRAEFGYCPQENGLWPNLTVKEHLELYAAVKGLRKEDAVVAISRLVNALKLHDQLNVQVQNLVAGATRKLCFVLSILGNSPVLILDEPSTGLDVSGKHQVWQAIQAVVKDNEKGVLLSTHDLAEAEALCDRAAIMVSGRLRCIGPIQHLKRKFGQDYVLELRVKDVSQEPLVHREILKLFPQAARQDRCFSLLTYKLPVTDVHPLSQAFHKLEAVKHGFDLEDYSLSQCTLDRVILELSKEQELGTVYEEADMTLGRKLLPPSDEL</sequence>
<proteinExistence type="evidence at protein level"/>
<comment type="function">
    <text evidence="1">Probable transporter which may play a role in macrophage lipid transport and homeostasis.</text>
</comment>
<comment type="subcellular location">
    <subcellularLocation>
        <location evidence="1">Golgi apparatus membrane</location>
        <topology evidence="1">Multi-pass membrane protein</topology>
    </subcellularLocation>
</comment>
<comment type="alternative products">
    <event type="alternative splicing"/>
    <isoform>
        <id>Q8K441-1</id>
        <name>1</name>
        <sequence type="displayed"/>
    </isoform>
    <isoform>
        <id>Q8K441-2</id>
        <name>2</name>
        <sequence type="described" ref="VSP_020699 VSP_020700"/>
    </isoform>
</comment>
<comment type="tissue specificity">
    <text evidence="4">Widely expressed with higher expression in heart, lung, brain, spleen and testis.</text>
</comment>
<comment type="developmental stage">
    <text evidence="4">Expressed during embryogenesis.</text>
</comment>
<comment type="similarity">
    <text evidence="6">Belongs to the ABC transporter superfamily. ABCA family.</text>
</comment>
<accession>Q8K441</accession>
<accession>A2A6R3</accession>
<accession>Q8BGH0</accession>
<accession>Q8BPT1</accession>
<reference key="1">
    <citation type="journal article" date="2003" name="Mamm. Genome">
        <title>Evolutionary analysis of a cluster of ATP-binding cassette (ABC) genes.</title>
        <authorList>
            <person name="Annilo T."/>
            <person name="Chen Z.-Q."/>
            <person name="Shulenin S."/>
            <person name="Dean M."/>
        </authorList>
    </citation>
    <scope>NUCLEOTIDE SEQUENCE [MRNA] (ISOFORM 1)</scope>
    <scope>TISSUE SPECIFICITY</scope>
    <scope>DEVELOPMENTAL STAGE</scope>
    <source>
        <strain>BALB/cJ</strain>
        <tissue>Liver</tissue>
    </source>
</reference>
<reference key="2">
    <citation type="journal article" date="2005" name="Science">
        <title>The transcriptional landscape of the mammalian genome.</title>
        <authorList>
            <person name="Carninci P."/>
            <person name="Kasukawa T."/>
            <person name="Katayama S."/>
            <person name="Gough J."/>
            <person name="Frith M.C."/>
            <person name="Maeda N."/>
            <person name="Oyama R."/>
            <person name="Ravasi T."/>
            <person name="Lenhard B."/>
            <person name="Wells C."/>
            <person name="Kodzius R."/>
            <person name="Shimokawa K."/>
            <person name="Bajic V.B."/>
            <person name="Brenner S.E."/>
            <person name="Batalov S."/>
            <person name="Forrest A.R."/>
            <person name="Zavolan M."/>
            <person name="Davis M.J."/>
            <person name="Wilming L.G."/>
            <person name="Aidinis V."/>
            <person name="Allen J.E."/>
            <person name="Ambesi-Impiombato A."/>
            <person name="Apweiler R."/>
            <person name="Aturaliya R.N."/>
            <person name="Bailey T.L."/>
            <person name="Bansal M."/>
            <person name="Baxter L."/>
            <person name="Beisel K.W."/>
            <person name="Bersano T."/>
            <person name="Bono H."/>
            <person name="Chalk A.M."/>
            <person name="Chiu K.P."/>
            <person name="Choudhary V."/>
            <person name="Christoffels A."/>
            <person name="Clutterbuck D.R."/>
            <person name="Crowe M.L."/>
            <person name="Dalla E."/>
            <person name="Dalrymple B.P."/>
            <person name="de Bono B."/>
            <person name="Della Gatta G."/>
            <person name="di Bernardo D."/>
            <person name="Down T."/>
            <person name="Engstrom P."/>
            <person name="Fagiolini M."/>
            <person name="Faulkner G."/>
            <person name="Fletcher C.F."/>
            <person name="Fukushima T."/>
            <person name="Furuno M."/>
            <person name="Futaki S."/>
            <person name="Gariboldi M."/>
            <person name="Georgii-Hemming P."/>
            <person name="Gingeras T.R."/>
            <person name="Gojobori T."/>
            <person name="Green R.E."/>
            <person name="Gustincich S."/>
            <person name="Harbers M."/>
            <person name="Hayashi Y."/>
            <person name="Hensch T.K."/>
            <person name="Hirokawa N."/>
            <person name="Hill D."/>
            <person name="Huminiecki L."/>
            <person name="Iacono M."/>
            <person name="Ikeo K."/>
            <person name="Iwama A."/>
            <person name="Ishikawa T."/>
            <person name="Jakt M."/>
            <person name="Kanapin A."/>
            <person name="Katoh M."/>
            <person name="Kawasawa Y."/>
            <person name="Kelso J."/>
            <person name="Kitamura H."/>
            <person name="Kitano H."/>
            <person name="Kollias G."/>
            <person name="Krishnan S.P."/>
            <person name="Kruger A."/>
            <person name="Kummerfeld S.K."/>
            <person name="Kurochkin I.V."/>
            <person name="Lareau L.F."/>
            <person name="Lazarevic D."/>
            <person name="Lipovich L."/>
            <person name="Liu J."/>
            <person name="Liuni S."/>
            <person name="McWilliam S."/>
            <person name="Madan Babu M."/>
            <person name="Madera M."/>
            <person name="Marchionni L."/>
            <person name="Matsuda H."/>
            <person name="Matsuzawa S."/>
            <person name="Miki H."/>
            <person name="Mignone F."/>
            <person name="Miyake S."/>
            <person name="Morris K."/>
            <person name="Mottagui-Tabar S."/>
            <person name="Mulder N."/>
            <person name="Nakano N."/>
            <person name="Nakauchi H."/>
            <person name="Ng P."/>
            <person name="Nilsson R."/>
            <person name="Nishiguchi S."/>
            <person name="Nishikawa S."/>
            <person name="Nori F."/>
            <person name="Ohara O."/>
            <person name="Okazaki Y."/>
            <person name="Orlando V."/>
            <person name="Pang K.C."/>
            <person name="Pavan W.J."/>
            <person name="Pavesi G."/>
            <person name="Pesole G."/>
            <person name="Petrovsky N."/>
            <person name="Piazza S."/>
            <person name="Reed J."/>
            <person name="Reid J.F."/>
            <person name="Ring B.Z."/>
            <person name="Ringwald M."/>
            <person name="Rost B."/>
            <person name="Ruan Y."/>
            <person name="Salzberg S.L."/>
            <person name="Sandelin A."/>
            <person name="Schneider C."/>
            <person name="Schoenbach C."/>
            <person name="Sekiguchi K."/>
            <person name="Semple C.A."/>
            <person name="Seno S."/>
            <person name="Sessa L."/>
            <person name="Sheng Y."/>
            <person name="Shibata Y."/>
            <person name="Shimada H."/>
            <person name="Shimada K."/>
            <person name="Silva D."/>
            <person name="Sinclair B."/>
            <person name="Sperling S."/>
            <person name="Stupka E."/>
            <person name="Sugiura K."/>
            <person name="Sultana R."/>
            <person name="Takenaka Y."/>
            <person name="Taki K."/>
            <person name="Tammoja K."/>
            <person name="Tan S.L."/>
            <person name="Tang S."/>
            <person name="Taylor M.S."/>
            <person name="Tegner J."/>
            <person name="Teichmann S.A."/>
            <person name="Ueda H.R."/>
            <person name="van Nimwegen E."/>
            <person name="Verardo R."/>
            <person name="Wei C.L."/>
            <person name="Yagi K."/>
            <person name="Yamanishi H."/>
            <person name="Zabarovsky E."/>
            <person name="Zhu S."/>
            <person name="Zimmer A."/>
            <person name="Hide W."/>
            <person name="Bult C."/>
            <person name="Grimmond S.M."/>
            <person name="Teasdale R.D."/>
            <person name="Liu E.T."/>
            <person name="Brusic V."/>
            <person name="Quackenbush J."/>
            <person name="Wahlestedt C."/>
            <person name="Mattick J.S."/>
            <person name="Hume D.A."/>
            <person name="Kai C."/>
            <person name="Sasaki D."/>
            <person name="Tomaru Y."/>
            <person name="Fukuda S."/>
            <person name="Kanamori-Katayama M."/>
            <person name="Suzuki M."/>
            <person name="Aoki J."/>
            <person name="Arakawa T."/>
            <person name="Iida J."/>
            <person name="Imamura K."/>
            <person name="Itoh M."/>
            <person name="Kato T."/>
            <person name="Kawaji H."/>
            <person name="Kawagashira N."/>
            <person name="Kawashima T."/>
            <person name="Kojima M."/>
            <person name="Kondo S."/>
            <person name="Konno H."/>
            <person name="Nakano K."/>
            <person name="Ninomiya N."/>
            <person name="Nishio T."/>
            <person name="Okada M."/>
            <person name="Plessy C."/>
            <person name="Shibata K."/>
            <person name="Shiraki T."/>
            <person name="Suzuki S."/>
            <person name="Tagami M."/>
            <person name="Waki K."/>
            <person name="Watahiki A."/>
            <person name="Okamura-Oho Y."/>
            <person name="Suzuki H."/>
            <person name="Kawai J."/>
            <person name="Hayashizaki Y."/>
        </authorList>
    </citation>
    <scope>NUCLEOTIDE SEQUENCE [LARGE SCALE MRNA] (ISOFORM 2)</scope>
    <source>
        <strain>C57BL/6J</strain>
        <tissue>Aorta</tissue>
        <tissue>Cerebellum</tissue>
        <tissue>Eye</tissue>
        <tissue>Vein</tissue>
    </source>
</reference>
<reference key="3">
    <citation type="journal article" date="2009" name="PLoS Biol.">
        <title>Lineage-specific biology revealed by a finished genome assembly of the mouse.</title>
        <authorList>
            <person name="Church D.M."/>
            <person name="Goodstadt L."/>
            <person name="Hillier L.W."/>
            <person name="Zody M.C."/>
            <person name="Goldstein S."/>
            <person name="She X."/>
            <person name="Bult C.J."/>
            <person name="Agarwala R."/>
            <person name="Cherry J.L."/>
            <person name="DiCuccio M."/>
            <person name="Hlavina W."/>
            <person name="Kapustin Y."/>
            <person name="Meric P."/>
            <person name="Maglott D."/>
            <person name="Birtle Z."/>
            <person name="Marques A.C."/>
            <person name="Graves T."/>
            <person name="Zhou S."/>
            <person name="Teague B."/>
            <person name="Potamousis K."/>
            <person name="Churas C."/>
            <person name="Place M."/>
            <person name="Herschleb J."/>
            <person name="Runnheim R."/>
            <person name="Forrest D."/>
            <person name="Amos-Landgraf J."/>
            <person name="Schwartz D.C."/>
            <person name="Cheng Z."/>
            <person name="Lindblad-Toh K."/>
            <person name="Eichler E.E."/>
            <person name="Ponting C.P."/>
        </authorList>
    </citation>
    <scope>NUCLEOTIDE SEQUENCE [LARGE SCALE GENOMIC DNA]</scope>
    <source>
        <strain>C57BL/6J</strain>
    </source>
</reference>
<reference key="4">
    <citation type="journal article" date="2004" name="Genome Res.">
        <title>The status, quality, and expansion of the NIH full-length cDNA project: the Mammalian Gene Collection (MGC).</title>
        <authorList>
            <consortium name="The MGC Project Team"/>
        </authorList>
    </citation>
    <scope>NUCLEOTIDE SEQUENCE [LARGE SCALE MRNA] (ISOFORM 1)</scope>
    <source>
        <tissue>Brain</tissue>
    </source>
</reference>
<reference key="5">
    <citation type="journal article" date="2010" name="Cell">
        <title>A tissue-specific atlas of mouse protein phosphorylation and expression.</title>
        <authorList>
            <person name="Huttlin E.L."/>
            <person name="Jedrychowski M.P."/>
            <person name="Elias J.E."/>
            <person name="Goswami T."/>
            <person name="Rad R."/>
            <person name="Beausoleil S.A."/>
            <person name="Villen J."/>
            <person name="Haas W."/>
            <person name="Sowa M.E."/>
            <person name="Gygi S.P."/>
        </authorList>
    </citation>
    <scope>IDENTIFICATION BY MASS SPECTROMETRY [LARGE SCALE ANALYSIS]</scope>
    <source>
        <tissue>Liver</tissue>
        <tissue>Lung</tissue>
    </source>
</reference>
<name>ABCA6_MOUSE</name>
<dbReference type="EC" id="7.6.2.-" evidence="1"/>
<dbReference type="EMBL" id="AF498361">
    <property type="protein sequence ID" value="AAM90907.1"/>
    <property type="molecule type" value="mRNA"/>
</dbReference>
<dbReference type="EMBL" id="AK040652">
    <property type="protein sequence ID" value="BAC30657.1"/>
    <property type="molecule type" value="mRNA"/>
</dbReference>
<dbReference type="EMBL" id="AK042934">
    <property type="protein sequence ID" value="BAC31409.1"/>
    <property type="molecule type" value="mRNA"/>
</dbReference>
<dbReference type="EMBL" id="AK053384">
    <property type="protein sequence ID" value="BAC35372.1"/>
    <property type="molecule type" value="mRNA"/>
</dbReference>
<dbReference type="EMBL" id="AL603792">
    <property type="status" value="NOT_ANNOTATED_CDS"/>
    <property type="molecule type" value="Genomic_DNA"/>
</dbReference>
<dbReference type="EMBL" id="BC132417">
    <property type="protein sequence ID" value="AAI32418.1"/>
    <property type="molecule type" value="mRNA"/>
</dbReference>
<dbReference type="EMBL" id="BC132419">
    <property type="protein sequence ID" value="AAI32420.1"/>
    <property type="molecule type" value="mRNA"/>
</dbReference>
<dbReference type="CCDS" id="CCDS25590.1">
    <molecule id="Q8K441-1"/>
</dbReference>
<dbReference type="RefSeq" id="NP_001160028.1">
    <molecule id="Q8K441-2"/>
    <property type="nucleotide sequence ID" value="NM_001166556.1"/>
</dbReference>
<dbReference type="RefSeq" id="NP_001160029.1">
    <property type="nucleotide sequence ID" value="NM_001166557.1"/>
</dbReference>
<dbReference type="RefSeq" id="NP_671751.2">
    <molecule id="Q8K441-1"/>
    <property type="nucleotide sequence ID" value="NM_147218.2"/>
</dbReference>
<dbReference type="RefSeq" id="XP_006534476.1">
    <molecule id="Q8K441-1"/>
    <property type="nucleotide sequence ID" value="XM_006534413.3"/>
</dbReference>
<dbReference type="RefSeq" id="XP_006534477.1">
    <molecule id="Q8K441-1"/>
    <property type="nucleotide sequence ID" value="XM_006534414.2"/>
</dbReference>
<dbReference type="SMR" id="Q8K441"/>
<dbReference type="BioGRID" id="218010">
    <property type="interactions" value="13"/>
</dbReference>
<dbReference type="FunCoup" id="Q8K441">
    <property type="interactions" value="78"/>
</dbReference>
<dbReference type="STRING" id="10090.ENSMUSP00000035458"/>
<dbReference type="GlyCosmos" id="Q8K441">
    <property type="glycosylation" value="3 sites, No reported glycans"/>
</dbReference>
<dbReference type="GlyGen" id="Q8K441">
    <property type="glycosylation" value="5 sites, 3 N-linked glycans (3 sites)"/>
</dbReference>
<dbReference type="iPTMnet" id="Q8K441"/>
<dbReference type="PhosphoSitePlus" id="Q8K441"/>
<dbReference type="SwissPalm" id="Q8K441"/>
<dbReference type="CPTAC" id="non-CPTAC-3441"/>
<dbReference type="jPOST" id="Q8K441"/>
<dbReference type="PaxDb" id="10090-ENSMUSP00000035458"/>
<dbReference type="PeptideAtlas" id="Q8K441"/>
<dbReference type="ProteomicsDB" id="285744">
    <molecule id="Q8K441-1"/>
</dbReference>
<dbReference type="ProteomicsDB" id="285745">
    <molecule id="Q8K441-2"/>
</dbReference>
<dbReference type="Antibodypedia" id="31832">
    <property type="antibodies" value="166 antibodies from 27 providers"/>
</dbReference>
<dbReference type="DNASU" id="76184"/>
<dbReference type="Ensembl" id="ENSMUST00000044003.14">
    <molecule id="Q8K441-1"/>
    <property type="protein sequence ID" value="ENSMUSP00000035458.8"/>
    <property type="gene ID" value="ENSMUSG00000044749.14"/>
</dbReference>
<dbReference type="GeneID" id="76184"/>
<dbReference type="KEGG" id="mmu:76184"/>
<dbReference type="UCSC" id="uc007mdj.3">
    <molecule id="Q8K441-1"/>
    <property type="organism name" value="mouse"/>
</dbReference>
<dbReference type="UCSC" id="uc007mdk.2">
    <molecule id="Q8K441-2"/>
    <property type="organism name" value="mouse"/>
</dbReference>
<dbReference type="AGR" id="MGI:1923434"/>
<dbReference type="CTD" id="23460"/>
<dbReference type="MGI" id="MGI:1923434">
    <property type="gene designation" value="Abca6"/>
</dbReference>
<dbReference type="VEuPathDB" id="HostDB:ENSMUSG00000044749"/>
<dbReference type="eggNOG" id="KOG0059">
    <property type="taxonomic scope" value="Eukaryota"/>
</dbReference>
<dbReference type="GeneTree" id="ENSGT00940000162244"/>
<dbReference type="HOGENOM" id="CLU_000604_19_1_1"/>
<dbReference type="InParanoid" id="Q8K441"/>
<dbReference type="OMA" id="ITSQIVF"/>
<dbReference type="OrthoDB" id="8061355at2759"/>
<dbReference type="PhylomeDB" id="Q8K441"/>
<dbReference type="TreeFam" id="TF105192"/>
<dbReference type="Reactome" id="R-MMU-1369062">
    <property type="pathway name" value="ABC transporters in lipid homeostasis"/>
</dbReference>
<dbReference type="BioGRID-ORCS" id="76184">
    <property type="hits" value="4 hits in 76 CRISPR screens"/>
</dbReference>
<dbReference type="ChiTaRS" id="Abca6">
    <property type="organism name" value="mouse"/>
</dbReference>
<dbReference type="PRO" id="PR:Q8K441"/>
<dbReference type="Proteomes" id="UP000000589">
    <property type="component" value="Chromosome 11"/>
</dbReference>
<dbReference type="RNAct" id="Q8K441">
    <property type="molecule type" value="protein"/>
</dbReference>
<dbReference type="Bgee" id="ENSMUSG00000044749">
    <property type="expression patterns" value="Expressed in lumbar dorsal root ganglion and 49 other cell types or tissues"/>
</dbReference>
<dbReference type="GO" id="GO:0000139">
    <property type="term" value="C:Golgi membrane"/>
    <property type="evidence" value="ECO:0000250"/>
    <property type="project" value="UniProtKB"/>
</dbReference>
<dbReference type="GO" id="GO:0005654">
    <property type="term" value="C:nucleoplasm"/>
    <property type="evidence" value="ECO:0007669"/>
    <property type="project" value="Ensembl"/>
</dbReference>
<dbReference type="GO" id="GO:0005886">
    <property type="term" value="C:plasma membrane"/>
    <property type="evidence" value="ECO:0007669"/>
    <property type="project" value="Ensembl"/>
</dbReference>
<dbReference type="GO" id="GO:0140359">
    <property type="term" value="F:ABC-type transporter activity"/>
    <property type="evidence" value="ECO:0007669"/>
    <property type="project" value="InterPro"/>
</dbReference>
<dbReference type="GO" id="GO:0005524">
    <property type="term" value="F:ATP binding"/>
    <property type="evidence" value="ECO:0007669"/>
    <property type="project" value="UniProtKB-KW"/>
</dbReference>
<dbReference type="GO" id="GO:0016887">
    <property type="term" value="F:ATP hydrolysis activity"/>
    <property type="evidence" value="ECO:0007669"/>
    <property type="project" value="InterPro"/>
</dbReference>
<dbReference type="CDD" id="cd03263">
    <property type="entry name" value="ABC_subfamily_A"/>
    <property type="match status" value="2"/>
</dbReference>
<dbReference type="FunFam" id="3.40.50.300:FF:000335">
    <property type="entry name" value="ATP binding cassette subfamily A member 5"/>
    <property type="match status" value="1"/>
</dbReference>
<dbReference type="FunFam" id="3.40.50.300:FF:000436">
    <property type="entry name" value="ATP binding cassette subfamily A member 9"/>
    <property type="match status" value="1"/>
</dbReference>
<dbReference type="Gene3D" id="3.40.50.300">
    <property type="entry name" value="P-loop containing nucleotide triphosphate hydrolases"/>
    <property type="match status" value="2"/>
</dbReference>
<dbReference type="InterPro" id="IPR003593">
    <property type="entry name" value="AAA+_ATPase"/>
</dbReference>
<dbReference type="InterPro" id="IPR013525">
    <property type="entry name" value="ABC2_TM"/>
</dbReference>
<dbReference type="InterPro" id="IPR003439">
    <property type="entry name" value="ABC_transporter-like_ATP-bd"/>
</dbReference>
<dbReference type="InterPro" id="IPR026082">
    <property type="entry name" value="ABCA"/>
</dbReference>
<dbReference type="InterPro" id="IPR027417">
    <property type="entry name" value="P-loop_NTPase"/>
</dbReference>
<dbReference type="InterPro" id="IPR056264">
    <property type="entry name" value="R2_ABCA1-4-like"/>
</dbReference>
<dbReference type="PANTHER" id="PTHR19229:SF13">
    <property type="entry name" value="ATP-BINDING CASSETTE SUB-FAMILY A MEMBER 6"/>
    <property type="match status" value="1"/>
</dbReference>
<dbReference type="PANTHER" id="PTHR19229">
    <property type="entry name" value="ATP-BINDING CASSETTE TRANSPORTER SUBFAMILY A ABCA"/>
    <property type="match status" value="1"/>
</dbReference>
<dbReference type="Pfam" id="PF12698">
    <property type="entry name" value="ABC2_membrane_3"/>
    <property type="match status" value="1"/>
</dbReference>
<dbReference type="Pfam" id="PF00005">
    <property type="entry name" value="ABC_tran"/>
    <property type="match status" value="2"/>
</dbReference>
<dbReference type="Pfam" id="PF23321">
    <property type="entry name" value="R1_ABCA1"/>
    <property type="match status" value="1"/>
</dbReference>
<dbReference type="SMART" id="SM00382">
    <property type="entry name" value="AAA"/>
    <property type="match status" value="2"/>
</dbReference>
<dbReference type="SUPFAM" id="SSF52540">
    <property type="entry name" value="P-loop containing nucleoside triphosphate hydrolases"/>
    <property type="match status" value="2"/>
</dbReference>
<dbReference type="PROSITE" id="PS50893">
    <property type="entry name" value="ABC_TRANSPORTER_2"/>
    <property type="match status" value="2"/>
</dbReference>
<keyword id="KW-0025">Alternative splicing</keyword>
<keyword id="KW-0067">ATP-binding</keyword>
<keyword id="KW-0325">Glycoprotein</keyword>
<keyword id="KW-0333">Golgi apparatus</keyword>
<keyword id="KW-0472">Membrane</keyword>
<keyword id="KW-0547">Nucleotide-binding</keyword>
<keyword id="KW-1185">Reference proteome</keyword>
<keyword id="KW-0677">Repeat</keyword>
<keyword id="KW-1278">Translocase</keyword>
<keyword id="KW-0812">Transmembrane</keyword>
<keyword id="KW-1133">Transmembrane helix</keyword>
<keyword id="KW-0813">Transport</keyword>
<evidence type="ECO:0000250" key="1">
    <source>
        <dbReference type="UniProtKB" id="Q8N139"/>
    </source>
</evidence>
<evidence type="ECO:0000255" key="2"/>
<evidence type="ECO:0000255" key="3">
    <source>
        <dbReference type="PROSITE-ProRule" id="PRU00434"/>
    </source>
</evidence>
<evidence type="ECO:0000269" key="4">
    <source>
    </source>
</evidence>
<evidence type="ECO:0000303" key="5">
    <source>
    </source>
</evidence>
<evidence type="ECO:0000305" key="6"/>
<protein>
    <recommendedName>
        <fullName evidence="6">ATP-binding cassette sub-family A member 6</fullName>
        <ecNumber evidence="1">7.6.2.-</ecNumber>
    </recommendedName>
</protein>
<organism>
    <name type="scientific">Mus musculus</name>
    <name type="common">Mouse</name>
    <dbReference type="NCBI Taxonomy" id="10090"/>
    <lineage>
        <taxon>Eukaryota</taxon>
        <taxon>Metazoa</taxon>
        <taxon>Chordata</taxon>
        <taxon>Craniata</taxon>
        <taxon>Vertebrata</taxon>
        <taxon>Euteleostomi</taxon>
        <taxon>Mammalia</taxon>
        <taxon>Eutheria</taxon>
        <taxon>Euarchontoglires</taxon>
        <taxon>Glires</taxon>
        <taxon>Rodentia</taxon>
        <taxon>Myomorpha</taxon>
        <taxon>Muroidea</taxon>
        <taxon>Muridae</taxon>
        <taxon>Murinae</taxon>
        <taxon>Mus</taxon>
        <taxon>Mus</taxon>
    </lineage>
</organism>
<gene>
    <name type="primary">Abca6</name>
</gene>